<keyword id="KW-0456">Lyase</keyword>
<keyword id="KW-0460">Magnesium</keyword>
<keyword id="KW-0479">Metal-binding</keyword>
<organism>
    <name type="scientific">Streptomyces pratensis (strain ATCC 33331 / IAF-45CD)</name>
    <dbReference type="NCBI Taxonomy" id="591167"/>
    <lineage>
        <taxon>Bacteria</taxon>
        <taxon>Bacillati</taxon>
        <taxon>Actinomycetota</taxon>
        <taxon>Actinomycetes</taxon>
        <taxon>Kitasatosporales</taxon>
        <taxon>Streptomycetaceae</taxon>
        <taxon>Streptomyces</taxon>
    </lineage>
</organism>
<accession>E8W6C7</accession>
<comment type="function">
    <text evidence="2">Catalyzes the conversion of (2E,6E)-farnesyl diphosphate (FPP) to yield the sesquiterpene (+)-(1(10)E,4E,6S,7R)-germacradien-6-ol via a putative 1,10-cyclization, which could require the abstraction of the pyrophosphate from FPP to yield the (E,E)-germacradienyl cation. The only accepted substrate is farnesyl diphosphate (FPP).</text>
</comment>
<comment type="catalytic activity">
    <reaction>
        <text>(2E,6E)-farnesyl diphosphate + H2O = (+)-(1(10)E,4E,6S,7R)-germacradien-6-ol + diphosphate</text>
        <dbReference type="Rhea" id="RHEA:12192"/>
        <dbReference type="ChEBI" id="CHEBI:15377"/>
        <dbReference type="ChEBI" id="CHEBI:33019"/>
        <dbReference type="ChEBI" id="CHEBI:137564"/>
        <dbReference type="ChEBI" id="CHEBI:175763"/>
        <dbReference type="EC" id="4.2.3.166"/>
    </reaction>
</comment>
<comment type="cofactor">
    <cofactor evidence="1">
        <name>Mg(2+)</name>
        <dbReference type="ChEBI" id="CHEBI:18420"/>
    </cofactor>
    <text evidence="1">Binds 3 Mg(2+) ions per subunit.</text>
</comment>
<comment type="pathway">
    <text evidence="4">Secondary metabolite biosynthesis; terpenoid biosynthesis.</text>
</comment>
<comment type="domain">
    <text evidence="5">The Asp-Asp-Xaa-Xaa-Xaa-Asp (DDXXXD) motif is important for the catalytic activity, presumably through binding to Mg(2+).</text>
</comment>
<comment type="similarity">
    <text evidence="4">Belongs to the terpene synthase family.</text>
</comment>
<gene>
    <name evidence="6" type="ordered locus">Sfla_1617</name>
</gene>
<evidence type="ECO:0000250" key="1">
    <source>
        <dbReference type="UniProtKB" id="B5HDJ6"/>
    </source>
</evidence>
<evidence type="ECO:0000269" key="2">
    <source>
    </source>
</evidence>
<evidence type="ECO:0000303" key="3">
    <source>
    </source>
</evidence>
<evidence type="ECO:0000305" key="4"/>
<evidence type="ECO:0000305" key="5">
    <source>
    </source>
</evidence>
<evidence type="ECO:0000312" key="6">
    <source>
        <dbReference type="EMBL" id="ADW03055.1"/>
    </source>
</evidence>
<name>GERS_STRFA</name>
<reference key="1">
    <citation type="submission" date="2011-01" db="EMBL/GenBank/DDBJ databases">
        <title>Complete sequence of chromosome of Streptomyces flavogriseus ATCC 33331.</title>
        <authorList>
            <consortium name="US DOE Joint Genome Institute"/>
            <person name="Lucas S."/>
            <person name="Copeland A."/>
            <person name="Lapidus A."/>
            <person name="Cheng J.-F."/>
            <person name="Goodwin L."/>
            <person name="Pitluck S."/>
            <person name="Davenport K."/>
            <person name="Detter J.C."/>
            <person name="Han C."/>
            <person name="Tapia R."/>
            <person name="Land M."/>
            <person name="Hauser L."/>
            <person name="Kyrpides N."/>
            <person name="Ivanova N."/>
            <person name="Ovchinnikova G."/>
            <person name="Pagani I."/>
            <person name="Brumm P."/>
            <person name="Mead D."/>
            <person name="Woyke T."/>
        </authorList>
    </citation>
    <scope>NUCLEOTIDE SEQUENCE [LARGE SCALE GENOMIC DNA]</scope>
    <source>
        <strain>ATCC 33331 / IAF-45CD</strain>
    </source>
</reference>
<reference key="2">
    <citation type="journal article" date="2015" name="Angew. Chem. Int. Ed.">
        <title>Conformational analysis, thermal rearrangement, and EI-MS fragmentation mechanism of (1(10)E,4E,6S,7R)-germacradien-6-ol by (13)C-labeling experiments.</title>
        <authorList>
            <person name="Rabe P."/>
            <person name="Barra L."/>
            <person name="Rinkel J."/>
            <person name="Riclea R."/>
            <person name="Citron C.A."/>
            <person name="Klapschinski T.A."/>
            <person name="Janusko A."/>
            <person name="Dickschat J.S."/>
        </authorList>
    </citation>
    <scope>FUNCTION</scope>
    <scope>CATALYTIC ACTIVITY</scope>
    <scope>SUBSTRATE SPECIFICITY</scope>
    <scope>DOMAIN</scope>
    <source>
        <strain>ATCC 33331 / IAF-45CD</strain>
    </source>
</reference>
<proteinExistence type="evidence at protein level"/>
<feature type="chain" id="PRO_0000443322" description="(+)-(1(10)E,4E,6S,7R)-germacradien-6-ol synthase">
    <location>
        <begin position="1"/>
        <end position="356"/>
    </location>
</feature>
<feature type="short sequence motif" description="DDXXXD motif" evidence="5">
    <location>
        <begin position="86"/>
        <end position="91"/>
    </location>
</feature>
<feature type="binding site" evidence="1">
    <location>
        <position position="86"/>
    </location>
    <ligand>
        <name>Mg(2+)</name>
        <dbReference type="ChEBI" id="CHEBI:18420"/>
        <label>1</label>
    </ligand>
</feature>
<feature type="binding site" evidence="1">
    <location>
        <position position="91"/>
    </location>
    <ligand>
        <name>Mg(2+)</name>
        <dbReference type="ChEBI" id="CHEBI:18420"/>
        <label>1</label>
    </ligand>
</feature>
<feature type="binding site" evidence="1">
    <location>
        <position position="91"/>
    </location>
    <ligand>
        <name>Mg(2+)</name>
        <dbReference type="ChEBI" id="CHEBI:18420"/>
        <label>2</label>
    </ligand>
</feature>
<feature type="binding site" evidence="1">
    <location>
        <position position="181"/>
    </location>
    <ligand>
        <name>substrate</name>
    </ligand>
</feature>
<feature type="binding site" evidence="1">
    <location>
        <position position="227"/>
    </location>
    <ligand>
        <name>Mg(2+)</name>
        <dbReference type="ChEBI" id="CHEBI:18420"/>
        <label>3</label>
    </ligand>
</feature>
<feature type="binding site" evidence="1">
    <location>
        <position position="231"/>
    </location>
    <ligand>
        <name>Mg(2+)</name>
        <dbReference type="ChEBI" id="CHEBI:18420"/>
        <label>3</label>
    </ligand>
</feature>
<feature type="binding site" evidence="1">
    <location>
        <position position="234"/>
    </location>
    <ligand>
        <name>substrate</name>
    </ligand>
</feature>
<feature type="binding site" evidence="1">
    <location>
        <position position="235"/>
    </location>
    <ligand>
        <name>Mg(2+)</name>
        <dbReference type="ChEBI" id="CHEBI:18420"/>
        <label>3</label>
    </ligand>
</feature>
<feature type="binding site" evidence="1">
    <location>
        <begin position="314"/>
        <end position="315"/>
    </location>
    <ligand>
        <name>substrate</name>
    </ligand>
</feature>
<protein>
    <recommendedName>
        <fullName evidence="3">(+)-(1(10)E,4E,6S,7R)-germacradien-6-ol synthase</fullName>
        <ecNumber evidence="2">4.2.3.166</ecNumber>
    </recommendedName>
    <alternativeName>
        <fullName evidence="3">Terpene synthase</fullName>
    </alternativeName>
    <alternativeName>
        <fullName evidence="3">Type I terpene cyclase</fullName>
    </alternativeName>
</protein>
<dbReference type="EC" id="4.2.3.166" evidence="2"/>
<dbReference type="EMBL" id="CP002475">
    <property type="protein sequence ID" value="ADW03055.1"/>
    <property type="molecule type" value="Genomic_DNA"/>
</dbReference>
<dbReference type="SMR" id="E8W6C7"/>
<dbReference type="STRING" id="591167.Sfla_1617"/>
<dbReference type="KEGG" id="sfa:Sfla_1617"/>
<dbReference type="PATRIC" id="fig|591167.6.peg.1658"/>
<dbReference type="eggNOG" id="COG0664">
    <property type="taxonomic scope" value="Bacteria"/>
</dbReference>
<dbReference type="HOGENOM" id="CLU_042538_4_2_11"/>
<dbReference type="OrthoDB" id="2989600at2"/>
<dbReference type="BRENDA" id="4.2.3.166">
    <property type="organism ID" value="15070"/>
</dbReference>
<dbReference type="UniPathway" id="UPA00213"/>
<dbReference type="Proteomes" id="UP000002066">
    <property type="component" value="Chromosome"/>
</dbReference>
<dbReference type="GO" id="GO:0046872">
    <property type="term" value="F:metal ion binding"/>
    <property type="evidence" value="ECO:0007669"/>
    <property type="project" value="UniProtKB-KW"/>
</dbReference>
<dbReference type="GO" id="GO:0010333">
    <property type="term" value="F:terpene synthase activity"/>
    <property type="evidence" value="ECO:0007669"/>
    <property type="project" value="InterPro"/>
</dbReference>
<dbReference type="GO" id="GO:0016114">
    <property type="term" value="P:terpenoid biosynthetic process"/>
    <property type="evidence" value="ECO:0007669"/>
    <property type="project" value="UniProtKB-UniPathway"/>
</dbReference>
<dbReference type="Gene3D" id="1.10.600.10">
    <property type="entry name" value="Farnesyl Diphosphate Synthase"/>
    <property type="match status" value="1"/>
</dbReference>
<dbReference type="InterPro" id="IPR008949">
    <property type="entry name" value="Isoprenoid_synthase_dom_sf"/>
</dbReference>
<dbReference type="InterPro" id="IPR034686">
    <property type="entry name" value="Terpene_cyclase-like_2"/>
</dbReference>
<dbReference type="PANTHER" id="PTHR35201:SF4">
    <property type="entry name" value="BETA-PINACENE SYNTHASE-RELATED"/>
    <property type="match status" value="1"/>
</dbReference>
<dbReference type="PANTHER" id="PTHR35201">
    <property type="entry name" value="TERPENE SYNTHASE"/>
    <property type="match status" value="1"/>
</dbReference>
<dbReference type="Pfam" id="PF19086">
    <property type="entry name" value="Terpene_syn_C_2"/>
    <property type="match status" value="1"/>
</dbReference>
<dbReference type="SFLD" id="SFLDS00005">
    <property type="entry name" value="Isoprenoid_Synthase_Type_I"/>
    <property type="match status" value="1"/>
</dbReference>
<dbReference type="SFLD" id="SFLDG01020">
    <property type="entry name" value="Terpene_Cyclase_Like_2"/>
    <property type="match status" value="1"/>
</dbReference>
<dbReference type="SUPFAM" id="SSF48576">
    <property type="entry name" value="Terpenoid synthases"/>
    <property type="match status" value="1"/>
</dbReference>
<sequence>MTSQASAPKIPQLWVPLPSGIHPSWREIDQGSAAWLDRFGLYSDHAQRERLTRISVGEITGRGGPDGRLAALQWTADFLMWLFAFDDEYCDEGPAAASPDATLLIITKLQRIVEVPWAAPADDNYSAALLELRLRLDDLTTPVQTARWAASFRAYLQGQIWMAANSTYGRIPTLSDHLAVRLDSSGVKIFSTLSEIIHGYDLPAADYDRHDVRGFVEVFAAIIGWSNDLVSYHKERRRSQDSYGNVVDLIAHERQCSVEEAVSETATMHTRAMALYLRLRDQILRDAEPELRKWITDCDSWIRADYDWSLTTHRYVNPDDPADLPVGSAEAPFRAREADQPLPIASVSWWWTLLKD</sequence>